<gene>
    <name evidence="1" type="primary">eIF3-S8</name>
    <name type="ORF">CPIJ000742</name>
</gene>
<proteinExistence type="inferred from homology"/>
<protein>
    <recommendedName>
        <fullName evidence="1">Eukaryotic translation initiation factor 3 subunit C</fullName>
        <shortName evidence="1">eIF3c</shortName>
    </recommendedName>
    <alternativeName>
        <fullName evidence="1">Eukaryotic translation initiation factor 3 subunit 8</fullName>
    </alternativeName>
</protein>
<feature type="chain" id="PRO_0000365384" description="Eukaryotic translation initiation factor 3 subunit C">
    <location>
        <begin position="1"/>
        <end position="904"/>
    </location>
</feature>
<feature type="domain" description="PCI" evidence="2">
    <location>
        <begin position="636"/>
        <end position="812"/>
    </location>
</feature>
<feature type="region of interest" description="Disordered" evidence="3">
    <location>
        <begin position="1"/>
        <end position="38"/>
    </location>
</feature>
<feature type="region of interest" description="Disordered" evidence="3">
    <location>
        <begin position="156"/>
        <end position="290"/>
    </location>
</feature>
<feature type="region of interest" description="Disordered" evidence="3">
    <location>
        <begin position="847"/>
        <end position="904"/>
    </location>
</feature>
<feature type="compositionally biased region" description="Polar residues" evidence="3">
    <location>
        <begin position="22"/>
        <end position="32"/>
    </location>
</feature>
<feature type="compositionally biased region" description="Acidic residues" evidence="3">
    <location>
        <begin position="161"/>
        <end position="183"/>
    </location>
</feature>
<feature type="compositionally biased region" description="Basic and acidic residues" evidence="3">
    <location>
        <begin position="194"/>
        <end position="206"/>
    </location>
</feature>
<feature type="compositionally biased region" description="Acidic residues" evidence="3">
    <location>
        <begin position="207"/>
        <end position="232"/>
    </location>
</feature>
<feature type="compositionally biased region" description="Basic and acidic residues" evidence="3">
    <location>
        <begin position="237"/>
        <end position="247"/>
    </location>
</feature>
<feature type="compositionally biased region" description="Basic residues" evidence="3">
    <location>
        <begin position="257"/>
        <end position="272"/>
    </location>
</feature>
<feature type="compositionally biased region" description="Low complexity" evidence="3">
    <location>
        <begin position="860"/>
        <end position="873"/>
    </location>
</feature>
<feature type="compositionally biased region" description="Basic and acidic residues" evidence="3">
    <location>
        <begin position="874"/>
        <end position="904"/>
    </location>
</feature>
<comment type="function">
    <text evidence="1">Component of the eukaryotic translation initiation factor 3 (eIF-3) complex, which is involved in protein synthesis of a specialized repertoire of mRNAs and, together with other initiation factors, stimulates binding of mRNA and methionyl-tRNAi to the 40S ribosome. The eIF-3 complex specifically targets and initiates translation of a subset of mRNAs involved in cell proliferation.</text>
</comment>
<comment type="subunit">
    <text evidence="1">Component of the eukaryotic translation initiation factor 3 (eIF-3) complex.</text>
</comment>
<comment type="subcellular location">
    <subcellularLocation>
        <location evidence="1">Cytoplasm</location>
    </subcellularLocation>
</comment>
<comment type="similarity">
    <text evidence="1">Belongs to the eIF-3 subunit C family.</text>
</comment>
<name>EIF3C_CULQU</name>
<evidence type="ECO:0000255" key="1">
    <source>
        <dbReference type="HAMAP-Rule" id="MF_03002"/>
    </source>
</evidence>
<evidence type="ECO:0000255" key="2">
    <source>
        <dbReference type="PROSITE-ProRule" id="PRU01185"/>
    </source>
</evidence>
<evidence type="ECO:0000256" key="3">
    <source>
        <dbReference type="SAM" id="MobiDB-lite"/>
    </source>
</evidence>
<keyword id="KW-0963">Cytoplasm</keyword>
<keyword id="KW-0396">Initiation factor</keyword>
<keyword id="KW-0648">Protein biosynthesis</keyword>
<keyword id="KW-1185">Reference proteome</keyword>
<dbReference type="EMBL" id="DS231818">
    <property type="protein sequence ID" value="EDS41375.1"/>
    <property type="molecule type" value="Genomic_DNA"/>
</dbReference>
<dbReference type="RefSeq" id="XP_001842307.1">
    <property type="nucleotide sequence ID" value="XM_001842255.1"/>
</dbReference>
<dbReference type="SMR" id="B0W0S3"/>
<dbReference type="FunCoup" id="B0W0S3">
    <property type="interactions" value="1922"/>
</dbReference>
<dbReference type="STRING" id="7176.B0W0S3"/>
<dbReference type="EnsemblMetazoa" id="CPIJ000742-RA">
    <property type="protein sequence ID" value="CPIJ000742-PA"/>
    <property type="gene ID" value="CPIJ000742"/>
</dbReference>
<dbReference type="KEGG" id="cqu:CpipJ_CPIJ000742"/>
<dbReference type="VEuPathDB" id="VectorBase:CPIJ000742"/>
<dbReference type="VEuPathDB" id="VectorBase:CQUJHB010886"/>
<dbReference type="eggNOG" id="KOG1076">
    <property type="taxonomic scope" value="Eukaryota"/>
</dbReference>
<dbReference type="HOGENOM" id="CLU_004304_0_0_1"/>
<dbReference type="InParanoid" id="B0W0S3"/>
<dbReference type="OMA" id="FRCGLIK"/>
<dbReference type="OrthoDB" id="29647at2759"/>
<dbReference type="PhylomeDB" id="B0W0S3"/>
<dbReference type="Proteomes" id="UP000002320">
    <property type="component" value="Unassembled WGS sequence"/>
</dbReference>
<dbReference type="GO" id="GO:0016282">
    <property type="term" value="C:eukaryotic 43S preinitiation complex"/>
    <property type="evidence" value="ECO:0007669"/>
    <property type="project" value="UniProtKB-UniRule"/>
</dbReference>
<dbReference type="GO" id="GO:0033290">
    <property type="term" value="C:eukaryotic 48S preinitiation complex"/>
    <property type="evidence" value="ECO:0007669"/>
    <property type="project" value="UniProtKB-UniRule"/>
</dbReference>
<dbReference type="GO" id="GO:0005852">
    <property type="term" value="C:eukaryotic translation initiation factor 3 complex"/>
    <property type="evidence" value="ECO:0007669"/>
    <property type="project" value="UniProtKB-UniRule"/>
</dbReference>
<dbReference type="GO" id="GO:0003723">
    <property type="term" value="F:RNA binding"/>
    <property type="evidence" value="ECO:0007669"/>
    <property type="project" value="InterPro"/>
</dbReference>
<dbReference type="GO" id="GO:0003743">
    <property type="term" value="F:translation initiation factor activity"/>
    <property type="evidence" value="ECO:0007669"/>
    <property type="project" value="UniProtKB-UniRule"/>
</dbReference>
<dbReference type="GO" id="GO:0031369">
    <property type="term" value="F:translation initiation factor binding"/>
    <property type="evidence" value="ECO:0007669"/>
    <property type="project" value="InterPro"/>
</dbReference>
<dbReference type="GO" id="GO:0001732">
    <property type="term" value="P:formation of cytoplasmic translation initiation complex"/>
    <property type="evidence" value="ECO:0007669"/>
    <property type="project" value="UniProtKB-UniRule"/>
</dbReference>
<dbReference type="FunFam" id="1.10.10.10:FF:000300">
    <property type="entry name" value="Eukaryotic translation initiation factor 3 subunit C"/>
    <property type="match status" value="1"/>
</dbReference>
<dbReference type="Gene3D" id="1.25.40.570">
    <property type="match status" value="1"/>
</dbReference>
<dbReference type="HAMAP" id="MF_03002">
    <property type="entry name" value="eIF3c"/>
    <property type="match status" value="1"/>
</dbReference>
<dbReference type="InterPro" id="IPR027516">
    <property type="entry name" value="EIF3C"/>
</dbReference>
<dbReference type="InterPro" id="IPR008905">
    <property type="entry name" value="EIF3C_N_dom"/>
</dbReference>
<dbReference type="InterPro" id="IPR000717">
    <property type="entry name" value="PCI_dom"/>
</dbReference>
<dbReference type="InterPro" id="IPR036390">
    <property type="entry name" value="WH_DNA-bd_sf"/>
</dbReference>
<dbReference type="PANTHER" id="PTHR13937">
    <property type="entry name" value="EUKARYOTIC TRANSLATION INITATION FACTOR 3, SUBUNIT 8 EIF3S8 -RELATED"/>
    <property type="match status" value="1"/>
</dbReference>
<dbReference type="PANTHER" id="PTHR13937:SF0">
    <property type="entry name" value="EUKARYOTIC TRANSLATION INITIATION FACTOR 3 SUBUNIT C-RELATED"/>
    <property type="match status" value="1"/>
</dbReference>
<dbReference type="Pfam" id="PF05470">
    <property type="entry name" value="eIF-3c_N"/>
    <property type="match status" value="2"/>
</dbReference>
<dbReference type="Pfam" id="PF01399">
    <property type="entry name" value="PCI"/>
    <property type="match status" value="1"/>
</dbReference>
<dbReference type="SMART" id="SM00088">
    <property type="entry name" value="PINT"/>
    <property type="match status" value="1"/>
</dbReference>
<dbReference type="SUPFAM" id="SSF46785">
    <property type="entry name" value="Winged helix' DNA-binding domain"/>
    <property type="match status" value="1"/>
</dbReference>
<dbReference type="PROSITE" id="PS50250">
    <property type="entry name" value="PCI"/>
    <property type="match status" value="1"/>
</dbReference>
<reference key="1">
    <citation type="submission" date="2007-03" db="EMBL/GenBank/DDBJ databases">
        <title>Annotation of Culex pipiens quinquefasciatus.</title>
        <authorList>
            <consortium name="The Broad Institute Genome Sequencing Platform"/>
            <person name="Atkinson P.W."/>
            <person name="Hemingway J."/>
            <person name="Christensen B.M."/>
            <person name="Higgs S."/>
            <person name="Kodira C.D."/>
            <person name="Hannick L.I."/>
            <person name="Megy K."/>
            <person name="O'Leary S.B."/>
            <person name="Pearson M."/>
            <person name="Haas B.J."/>
            <person name="Mauceli E."/>
            <person name="Wortman J.R."/>
            <person name="Lee N.H."/>
            <person name="Guigo R."/>
            <person name="Stanke M."/>
            <person name="Alvarado L."/>
            <person name="Amedeo P."/>
            <person name="Antoine C.H."/>
            <person name="Arensburger P."/>
            <person name="Bidwell S.L."/>
            <person name="Crawford M."/>
            <person name="Camaro F."/>
            <person name="Devon K."/>
            <person name="Engels R."/>
            <person name="Hammond M."/>
            <person name="Howarth C."/>
            <person name="Koehrsen M."/>
            <person name="Lawson D."/>
            <person name="Montgomery P."/>
            <person name="Nene V."/>
            <person name="Nusbaum C."/>
            <person name="Puiu D."/>
            <person name="Romero-Severson J."/>
            <person name="Severson D.W."/>
            <person name="Shumway M."/>
            <person name="Sisk P."/>
            <person name="Stolte C."/>
            <person name="Zeng Q."/>
            <person name="Eisenstadt E."/>
            <person name="Fraser-Liggett C.M."/>
            <person name="Strausberg R."/>
            <person name="Galagan J."/>
            <person name="Birren B."/>
            <person name="Collins F.H."/>
        </authorList>
    </citation>
    <scope>NUCLEOTIDE SEQUENCE [LARGE SCALE GENOMIC DNA]</scope>
    <source>
        <strain>JHB</strain>
    </source>
</reference>
<accession>B0W0S3</accession>
<organism>
    <name type="scientific">Culex quinquefasciatus</name>
    <name type="common">Southern house mosquito</name>
    <name type="synonym">Culex pungens</name>
    <dbReference type="NCBI Taxonomy" id="7176"/>
    <lineage>
        <taxon>Eukaryota</taxon>
        <taxon>Metazoa</taxon>
        <taxon>Ecdysozoa</taxon>
        <taxon>Arthropoda</taxon>
        <taxon>Hexapoda</taxon>
        <taxon>Insecta</taxon>
        <taxon>Pterygota</taxon>
        <taxon>Neoptera</taxon>
        <taxon>Endopterygota</taxon>
        <taxon>Diptera</taxon>
        <taxon>Nematocera</taxon>
        <taxon>Culicoidea</taxon>
        <taxon>Culicidae</taxon>
        <taxon>Culicinae</taxon>
        <taxon>Culicini</taxon>
        <taxon>Culex</taxon>
        <taxon>Culex</taxon>
    </lineage>
</organism>
<sequence>MSRFFAGGSESDSDSSSDSEPIQRQTAPQFTFSDEEEDVKRVVRSTKEKRYEDLSNIIKSIRNYKKIKDMSSLLSSFEDLTRAYAKALPVITKEENGVCPRFIIRALAELEDFINEVWDDREGRKNLSKNNSKSLGALRQKFRKYIKDFDSDLKKFRESPDAADDEDEEEEKKEEEESDDEEAAVVPAAKAVSFKKDTVEKVKVEKDDDDSDDSIDWGQDSDSDESSSEEEAYGANIRERFLKRPEKEDGDDGEKKKEKKKTKETKDSRKKKRVEDDDDEGWESSATSEKPKMFAKDAEIDVALVVNKLNEVMAARGKKRTDRKLQIEFLRELRAISEEKKLGAAVAAKIRFNIVSAIFDYNPKVSEPMKLEHWSKLLEEIQALIKLLLANEDIVLSENILDENEEYDTAPYKIRGCMLTAVERLDDEFTKLLKECDPHSNEYVDRLKDEVTVTNVIEQVVQYVERLGNEMETCRIYLRKIDHLYYKFDPNVLKKRKAQLPASSLTSVDEMERLCRFIYAKDQTDRLRTRAILSHIFHHALHDNWFQARDLVLMSHLQETIHHSDPPTQILYNRTMANLGLCAFRHGNIKDAHQCLVDLMMTGKPKELLAQGLVPQRQNERSLEQEKVEKQRQMPFHMHINLELLECVYLVSAMLLEIPYMAAHEFDARRRMISKTFYQQLRSSERQSLVGPPESMREHVVAAAKAMRHGDWQACSNFIVNKKMNVKVWDLFYEADRVREMLAKFIKEEALRTYLFTYSNVYASISVPYLAEMFDLPKSKVHSLISKMIINEELMASLDDPTETVVLHRSEPSRLQALSMQLADKVTNLVDSNERVFEMKQGNFFQRGGNQGYNRDRQNYRNQNQNRENWNNNRRQDRGNRNRNQNRDREQREQHRVEFEEKAE</sequence>